<accession>Q7BBW0</accession>
<accession>Q578B0</accession>
<accession>Q9RHA3</accession>
<reference key="1">
    <citation type="submission" date="1998-03" db="EMBL/GenBank/DDBJ databases">
        <title>A phosphorelay in Brucella species.</title>
        <authorList>
            <person name="Devos D.P."/>
            <person name="Rousseau C."/>
            <person name="Depiereux E."/>
            <person name="Letesson J.-J."/>
        </authorList>
    </citation>
    <scope>NUCLEOTIDE SEQUENCE [GENOMIC DNA]</scope>
</reference>
<reference key="2">
    <citation type="journal article" date="2002" name="Mol. Microbiol.">
        <title>Plasticity of a transcriptional regulation network among alpha-proteobacteria is supported by the identification of CtrA targets in Brucella abortus.</title>
        <authorList>
            <person name="Bellefontaine A.F."/>
            <person name="Pierreux C.E."/>
            <person name="Mertens P."/>
            <person name="Vandenhaute J."/>
            <person name="Letesson J.J."/>
            <person name="De Bolle X."/>
        </authorList>
    </citation>
    <scope>NUCLEOTIDE SEQUENCE [GENOMIC DNA]</scope>
    <source>
        <strain>544 / Biovar 1</strain>
    </source>
</reference>
<reference key="3">
    <citation type="journal article" date="2005" name="J. Bacteriol.">
        <title>Completion of the genome sequence of Brucella abortus and comparison to the highly similar genomes of Brucella melitensis and Brucella suis.</title>
        <authorList>
            <person name="Halling S.M."/>
            <person name="Peterson-Burch B.D."/>
            <person name="Bricker B.J."/>
            <person name="Zuerner R.L."/>
            <person name="Qing Z."/>
            <person name="Li L.-L."/>
            <person name="Kapur V."/>
            <person name="Alt D.P."/>
            <person name="Olsen S.C."/>
        </authorList>
    </citation>
    <scope>NUCLEOTIDE SEQUENCE [LARGE SCALE GENOMIC DNA]</scope>
    <source>
        <strain>9-941</strain>
    </source>
</reference>
<reference key="4">
    <citation type="journal article" date="2007" name="EMBO J.">
        <title>The asymmetric distribution of the essential histidine kinase PdhS indicates a differentiation event in Brucella abortus.</title>
        <authorList>
            <person name="Hallez R."/>
            <person name="Mignolet J."/>
            <person name="Van Mullem V."/>
            <person name="Wery M."/>
            <person name="Vandenhaute J."/>
            <person name="Letesson J.-J."/>
            <person name="Jacobs-Wagner C."/>
            <person name="De Bolle X."/>
        </authorList>
    </citation>
    <scope>FUNCTION IN CONTROL OF CELL SHAPE</scope>
    <scope>DISRUPTION PHENOTYPE</scope>
    <scope>SUBCELLULAR LOCATION</scope>
    <scope>PHOSPHORYLATION AT ASP-53</scope>
    <scope>INTERACTION WITH DIVL/PLEC/DIVJ/PDHS</scope>
    <scope>MUTAGENESIS OF ASP-53</scope>
    <source>
        <strain>544 / Biovar 1</strain>
    </source>
</reference>
<sequence length="123" mass="13973">MTKSVMIVEDNELNMKLFRDLIEASGYETIRTRSGLEALDLAREHHPDLILMDIQLPEVSGLEVTKWLKDDEELRHIPVIAVTAFAMKGDEERIRQGGCEAYISKPISVPRFIETIKSYLGDA</sequence>
<keyword id="KW-0963">Cytoplasm</keyword>
<keyword id="KW-0238">DNA-binding</keyword>
<keyword id="KW-0597">Phosphoprotein</keyword>
<keyword id="KW-0804">Transcription</keyword>
<keyword id="KW-0805">Transcription regulation</keyword>
<keyword id="KW-0902">Two-component regulatory system</keyword>
<dbReference type="EMBL" id="AF051940">
    <property type="protein sequence ID" value="AAF14690.1"/>
    <property type="molecule type" value="mRNA"/>
</dbReference>
<dbReference type="EMBL" id="AF411569">
    <property type="protein sequence ID" value="AAL86375.1"/>
    <property type="molecule type" value="Genomic_DNA"/>
</dbReference>
<dbReference type="EMBL" id="AE017224">
    <property type="protein sequence ID" value="AAX76024.1"/>
    <property type="molecule type" value="Genomic_DNA"/>
</dbReference>
<dbReference type="RefSeq" id="WP_002966022.1">
    <property type="nucleotide sequence ID" value="NC_006933.1"/>
</dbReference>
<dbReference type="SMR" id="Q7BBW0"/>
<dbReference type="IntAct" id="Q7BBW0">
    <property type="interactions" value="3"/>
</dbReference>
<dbReference type="MINT" id="Q7BBW0"/>
<dbReference type="EnsemblBacteria" id="AAX76024">
    <property type="protein sequence ID" value="AAX76024"/>
    <property type="gene ID" value="BruAb2_0613"/>
</dbReference>
<dbReference type="KEGG" id="bmb:BruAb2_0613"/>
<dbReference type="HOGENOM" id="CLU_000445_69_17_5"/>
<dbReference type="PRO" id="PR:Q7BBW0"/>
<dbReference type="Proteomes" id="UP000000540">
    <property type="component" value="Chromosome II"/>
</dbReference>
<dbReference type="GO" id="GO:0005737">
    <property type="term" value="C:cytoplasm"/>
    <property type="evidence" value="ECO:0007669"/>
    <property type="project" value="UniProtKB-SubCell"/>
</dbReference>
<dbReference type="GO" id="GO:0003677">
    <property type="term" value="F:DNA binding"/>
    <property type="evidence" value="ECO:0007669"/>
    <property type="project" value="UniProtKB-KW"/>
</dbReference>
<dbReference type="GO" id="GO:0000160">
    <property type="term" value="P:phosphorelay signal transduction system"/>
    <property type="evidence" value="ECO:0007669"/>
    <property type="project" value="UniProtKB-KW"/>
</dbReference>
<dbReference type="CDD" id="cd17548">
    <property type="entry name" value="REC_DivK-like"/>
    <property type="match status" value="1"/>
</dbReference>
<dbReference type="Gene3D" id="3.40.50.2300">
    <property type="match status" value="1"/>
</dbReference>
<dbReference type="InterPro" id="IPR050595">
    <property type="entry name" value="Bact_response_regulator"/>
</dbReference>
<dbReference type="InterPro" id="IPR011006">
    <property type="entry name" value="CheY-like_superfamily"/>
</dbReference>
<dbReference type="InterPro" id="IPR001789">
    <property type="entry name" value="Sig_transdc_resp-reg_receiver"/>
</dbReference>
<dbReference type="PANTHER" id="PTHR44591:SF3">
    <property type="entry name" value="RESPONSE REGULATORY DOMAIN-CONTAINING PROTEIN"/>
    <property type="match status" value="1"/>
</dbReference>
<dbReference type="PANTHER" id="PTHR44591">
    <property type="entry name" value="STRESS RESPONSE REGULATOR PROTEIN 1"/>
    <property type="match status" value="1"/>
</dbReference>
<dbReference type="Pfam" id="PF00072">
    <property type="entry name" value="Response_reg"/>
    <property type="match status" value="1"/>
</dbReference>
<dbReference type="SMART" id="SM00448">
    <property type="entry name" value="REC"/>
    <property type="match status" value="1"/>
</dbReference>
<dbReference type="SUPFAM" id="SSF52172">
    <property type="entry name" value="CheY-like"/>
    <property type="match status" value="1"/>
</dbReference>
<dbReference type="PROSITE" id="PS50110">
    <property type="entry name" value="RESPONSE_REGULATORY"/>
    <property type="match status" value="1"/>
</dbReference>
<protein>
    <recommendedName>
        <fullName>Polar-differentiation response regulator DivK</fullName>
    </recommendedName>
</protein>
<proteinExistence type="evidence at protein level"/>
<name>DIVK_BRUAB</name>
<organism>
    <name type="scientific">Brucella abortus biovar 1 (strain 9-941)</name>
    <dbReference type="NCBI Taxonomy" id="262698"/>
    <lineage>
        <taxon>Bacteria</taxon>
        <taxon>Pseudomonadati</taxon>
        <taxon>Pseudomonadota</taxon>
        <taxon>Alphaproteobacteria</taxon>
        <taxon>Hyphomicrobiales</taxon>
        <taxon>Brucellaceae</taxon>
        <taxon>Brucella/Ochrobactrum group</taxon>
        <taxon>Brucella</taxon>
    </lineage>
</organism>
<feature type="chain" id="PRO_0000363206" description="Polar-differentiation response regulator DivK">
    <location>
        <begin position="1"/>
        <end position="123"/>
    </location>
</feature>
<feature type="domain" description="Response regulatory" evidence="1">
    <location>
        <begin position="4"/>
        <end position="120"/>
    </location>
</feature>
<feature type="modified residue" description="4-aspartylphosphate" evidence="1 2">
    <location>
        <position position="53"/>
    </location>
</feature>
<feature type="mutagenesis site" description="Abolishes phosphorylation and localization to the cell pole." evidence="2">
    <original>D</original>
    <variation>A</variation>
    <location>
        <position position="53"/>
    </location>
</feature>
<feature type="sequence conflict" description="In Ref. 1; AAF14690." evidence="3" ref="1">
    <original>E</original>
    <variation>R</variation>
    <location>
        <position position="92"/>
    </location>
</feature>
<comment type="function">
    <text evidence="2">Essential protein that is involved in the control of cell division, probably through the regulation of ctrA. Its phosphorylation status is regulated by PdhS.</text>
</comment>
<comment type="subunit">
    <text evidence="2">Interacts with DivL, PleC, DivJ and PdhS.</text>
</comment>
<comment type="subcellular location">
    <subcellularLocation>
        <location evidence="2">Cytoplasm</location>
    </subcellularLocation>
    <text>Localized at one pole of the cell. Colocalizes with PdhS.</text>
</comment>
<comment type="disruption phenotype">
    <text evidence="2">Lethal.</text>
</comment>
<gene>
    <name type="primary">divK</name>
    <name type="ordered locus">BruAb2_0613</name>
</gene>
<evidence type="ECO:0000255" key="1">
    <source>
        <dbReference type="PROSITE-ProRule" id="PRU00169"/>
    </source>
</evidence>
<evidence type="ECO:0000269" key="2">
    <source>
    </source>
</evidence>
<evidence type="ECO:0000305" key="3"/>